<sequence length="414" mass="46706">MPSSMSVRLFTASAAQRKKIQEGDCCVVLAGKTQGRFILIGAVARVSGYIPSYLDKDELCVVCGDKATGYHYRCITCEGCKGFFRRTIQKNLHPSYSCKYEGKCVIDKVTRNQCQECRFKKCKTVGMATDLVLDDSKRLAKRKLIEENREKRRKDEIQKSIVQRPEPTQEEWELIQVVTEAHVATNAQGSHWKQKRKFLPEDIGQAPIVNAPEGGKVDLEAFSQFTKIITPAITRVVDFAKKLPMFCELPCEDQIILLKGCCMEIMSLRAAVRYDPESETLTLNGEMAVTRGQLKNGGLGVVSDAIFDLGVSLSSFSLDDTEVALLQAVLLMSSDRPGLSSVERIEKCQEGFLLAFEHYINYRKHNIAHFWPKLLMKVTDLRMIGACHASRFLHMKVECPTELFPPLFLEVFED</sequence>
<comment type="function">
    <text>High affinity receptor for triiodothyronine (T3).</text>
</comment>
<comment type="subcellular location">
    <subcellularLocation>
        <location>Nucleus</location>
    </subcellularLocation>
</comment>
<comment type="alternative products">
    <event type="alternative splicing"/>
    <isoform>
        <id>P18119-1</id>
        <name>Beta-B2</name>
        <name>BetaB-II</name>
        <sequence type="displayed"/>
    </isoform>
    <isoform>
        <id>P18119-2</id>
        <name>Beta-B1</name>
        <name>BetaB-I</name>
        <sequence type="described" ref="VSP_003628"/>
    </isoform>
    <text>Additional isoforms seem to exist.</text>
</comment>
<comment type="developmental stage">
    <text evidence="3">Expression peaks at the climax of metamorphosis.</text>
</comment>
<comment type="induction">
    <text evidence="3">By thyroid hormone.</text>
</comment>
<comment type="domain">
    <text>Composed of three domains: a modulating N-terminal domain, a DNA-binding domain and a C-terminal ligand-binding domain.</text>
</comment>
<comment type="similarity">
    <text evidence="5">Belongs to the nuclear hormone receptor family. NR1 subfamily.</text>
</comment>
<organism>
    <name type="scientific">Xenopus laevis</name>
    <name type="common">African clawed frog</name>
    <dbReference type="NCBI Taxonomy" id="8355"/>
    <lineage>
        <taxon>Eukaryota</taxon>
        <taxon>Metazoa</taxon>
        <taxon>Chordata</taxon>
        <taxon>Craniata</taxon>
        <taxon>Vertebrata</taxon>
        <taxon>Euteleostomi</taxon>
        <taxon>Amphibia</taxon>
        <taxon>Batrachia</taxon>
        <taxon>Anura</taxon>
        <taxon>Pipoidea</taxon>
        <taxon>Pipidae</taxon>
        <taxon>Xenopodinae</taxon>
        <taxon>Xenopus</taxon>
        <taxon>Xenopus</taxon>
    </lineage>
</organism>
<dbReference type="EMBL" id="M35362">
    <property type="protein sequence ID" value="AAA49658.1"/>
    <property type="molecule type" value="mRNA"/>
</dbReference>
<dbReference type="EMBL" id="M35361">
    <property type="protein sequence ID" value="AAA49657.1"/>
    <property type="molecule type" value="mRNA"/>
</dbReference>
<dbReference type="PIR" id="D36067">
    <property type="entry name" value="D36067"/>
</dbReference>
<dbReference type="RefSeq" id="NP_001081250.1">
    <molecule id="P18119-1"/>
    <property type="nucleotide sequence ID" value="NM_001087781.1"/>
</dbReference>
<dbReference type="RefSeq" id="XP_018124099.1">
    <property type="nucleotide sequence ID" value="XM_018268610.1"/>
</dbReference>
<dbReference type="SMR" id="P18119"/>
<dbReference type="GeneID" id="397734"/>
<dbReference type="KEGG" id="xla:397734"/>
<dbReference type="AGR" id="Xenbase:XB-GENE-6252616"/>
<dbReference type="CTD" id="397734"/>
<dbReference type="Xenbase" id="XB-GENE-6252616">
    <property type="gene designation" value="thrb.S"/>
</dbReference>
<dbReference type="OrthoDB" id="6081310at2759"/>
<dbReference type="Proteomes" id="UP000186698">
    <property type="component" value="Chromosome 6S"/>
</dbReference>
<dbReference type="Bgee" id="397734">
    <property type="expression patterns" value="Expressed in internal ear and 8 other cell types or tissues"/>
</dbReference>
<dbReference type="GO" id="GO:0005634">
    <property type="term" value="C:nucleus"/>
    <property type="evidence" value="ECO:0000318"/>
    <property type="project" value="GO_Central"/>
</dbReference>
<dbReference type="GO" id="GO:0090575">
    <property type="term" value="C:RNA polymerase II transcription regulator complex"/>
    <property type="evidence" value="ECO:0000318"/>
    <property type="project" value="GO_Central"/>
</dbReference>
<dbReference type="GO" id="GO:0004879">
    <property type="term" value="F:nuclear receptor activity"/>
    <property type="evidence" value="ECO:0000318"/>
    <property type="project" value="GO_Central"/>
</dbReference>
<dbReference type="GO" id="GO:0000978">
    <property type="term" value="F:RNA polymerase II cis-regulatory region sequence-specific DNA binding"/>
    <property type="evidence" value="ECO:0000318"/>
    <property type="project" value="GO_Central"/>
</dbReference>
<dbReference type="GO" id="GO:0008270">
    <property type="term" value="F:zinc ion binding"/>
    <property type="evidence" value="ECO:0007669"/>
    <property type="project" value="UniProtKB-KW"/>
</dbReference>
<dbReference type="GO" id="GO:0030154">
    <property type="term" value="P:cell differentiation"/>
    <property type="evidence" value="ECO:0000318"/>
    <property type="project" value="GO_Central"/>
</dbReference>
<dbReference type="GO" id="GO:0000122">
    <property type="term" value="P:negative regulation of transcription by RNA polymerase II"/>
    <property type="evidence" value="ECO:0000318"/>
    <property type="project" value="GO_Central"/>
</dbReference>
<dbReference type="GO" id="GO:0045944">
    <property type="term" value="P:positive regulation of transcription by RNA polymerase II"/>
    <property type="evidence" value="ECO:0000318"/>
    <property type="project" value="GO_Central"/>
</dbReference>
<dbReference type="GO" id="GO:0048384">
    <property type="term" value="P:retinoic acid receptor signaling pathway"/>
    <property type="evidence" value="ECO:0000318"/>
    <property type="project" value="GO_Central"/>
</dbReference>
<dbReference type="GO" id="GO:0002154">
    <property type="term" value="P:thyroid hormone receptor signaling pathway"/>
    <property type="evidence" value="ECO:0000318"/>
    <property type="project" value="GO_Central"/>
</dbReference>
<dbReference type="CDD" id="cd06961">
    <property type="entry name" value="NR_DBD_TR"/>
    <property type="match status" value="1"/>
</dbReference>
<dbReference type="CDD" id="cd06935">
    <property type="entry name" value="NR_LBD_TR"/>
    <property type="match status" value="1"/>
</dbReference>
<dbReference type="FunFam" id="1.10.565.10:FF:000006">
    <property type="entry name" value="Thyroid hormone receptor beta 2"/>
    <property type="match status" value="1"/>
</dbReference>
<dbReference type="FunFam" id="3.30.50.10:FF:000011">
    <property type="entry name" value="Thyroid hormone receptor beta isoform"/>
    <property type="match status" value="1"/>
</dbReference>
<dbReference type="Gene3D" id="3.30.50.10">
    <property type="entry name" value="Erythroid Transcription Factor GATA-1, subunit A"/>
    <property type="match status" value="1"/>
</dbReference>
<dbReference type="Gene3D" id="1.10.565.10">
    <property type="entry name" value="Retinoid X Receptor"/>
    <property type="match status" value="1"/>
</dbReference>
<dbReference type="InterPro" id="IPR035500">
    <property type="entry name" value="NHR-like_dom_sf"/>
</dbReference>
<dbReference type="InterPro" id="IPR000536">
    <property type="entry name" value="Nucl_hrmn_rcpt_lig-bd"/>
</dbReference>
<dbReference type="InterPro" id="IPR050234">
    <property type="entry name" value="Nuclear_hormone_rcpt_NR1"/>
</dbReference>
<dbReference type="InterPro" id="IPR001723">
    <property type="entry name" value="Nuclear_hrmn_rcpt"/>
</dbReference>
<dbReference type="InterPro" id="IPR001728">
    <property type="entry name" value="ThyrH_rcpt"/>
</dbReference>
<dbReference type="InterPro" id="IPR001628">
    <property type="entry name" value="Znf_hrmn_rcpt"/>
</dbReference>
<dbReference type="InterPro" id="IPR013088">
    <property type="entry name" value="Znf_NHR/GATA"/>
</dbReference>
<dbReference type="PANTHER" id="PTHR24082">
    <property type="entry name" value="NUCLEAR HORMONE RECEPTOR"/>
    <property type="match status" value="1"/>
</dbReference>
<dbReference type="PANTHER" id="PTHR24082:SF210">
    <property type="entry name" value="THYROID HORMONE RECEPTOR BETA"/>
    <property type="match status" value="1"/>
</dbReference>
<dbReference type="Pfam" id="PF00104">
    <property type="entry name" value="Hormone_recep"/>
    <property type="match status" value="1"/>
</dbReference>
<dbReference type="Pfam" id="PF00105">
    <property type="entry name" value="zf-C4"/>
    <property type="match status" value="1"/>
</dbReference>
<dbReference type="PRINTS" id="PR00398">
    <property type="entry name" value="STRDHORMONER"/>
</dbReference>
<dbReference type="PRINTS" id="PR00047">
    <property type="entry name" value="STROIDFINGER"/>
</dbReference>
<dbReference type="PRINTS" id="PR00546">
    <property type="entry name" value="THYROIDHORMR"/>
</dbReference>
<dbReference type="SMART" id="SM00430">
    <property type="entry name" value="HOLI"/>
    <property type="match status" value="1"/>
</dbReference>
<dbReference type="SMART" id="SM00399">
    <property type="entry name" value="ZnF_C4"/>
    <property type="match status" value="1"/>
</dbReference>
<dbReference type="SUPFAM" id="SSF57716">
    <property type="entry name" value="Glucocorticoid receptor-like (DNA-binding domain)"/>
    <property type="match status" value="1"/>
</dbReference>
<dbReference type="SUPFAM" id="SSF48508">
    <property type="entry name" value="Nuclear receptor ligand-binding domain"/>
    <property type="match status" value="1"/>
</dbReference>
<dbReference type="PROSITE" id="PS51843">
    <property type="entry name" value="NR_LBD"/>
    <property type="match status" value="1"/>
</dbReference>
<dbReference type="PROSITE" id="PS00031">
    <property type="entry name" value="NUCLEAR_REC_DBD_1"/>
    <property type="match status" value="1"/>
</dbReference>
<dbReference type="PROSITE" id="PS51030">
    <property type="entry name" value="NUCLEAR_REC_DBD_2"/>
    <property type="match status" value="1"/>
</dbReference>
<protein>
    <recommendedName>
        <fullName>Thyroid hormone receptor beta-B</fullName>
        <shortName>TRbetaB</shortName>
    </recommendedName>
    <alternativeName>
        <fullName>Nuclear receptor subfamily 1 group A member 2-B</fullName>
    </alternativeName>
</protein>
<proteinExistence type="evidence at transcript level"/>
<accession>P18119</accession>
<accession>P18118</accession>
<keyword id="KW-0025">Alternative splicing</keyword>
<keyword id="KW-0238">DNA-binding</keyword>
<keyword id="KW-0479">Metal-binding</keyword>
<keyword id="KW-0539">Nucleus</keyword>
<keyword id="KW-0675">Receptor</keyword>
<keyword id="KW-1185">Reference proteome</keyword>
<keyword id="KW-0804">Transcription</keyword>
<keyword id="KW-0805">Transcription regulation</keyword>
<keyword id="KW-0862">Zinc</keyword>
<keyword id="KW-0863">Zinc-finger</keyword>
<gene>
    <name type="primary">thrb-b</name>
    <name type="synonym">nr1a2-b</name>
    <name type="synonym">thrb2</name>
</gene>
<reference key="1">
    <citation type="journal article" date="1990" name="Proc. Natl. Acad. Sci. U.S.A.">
        <title>Xenopus laevis alpha and beta thyroid hormone receptors.</title>
        <authorList>
            <person name="Yaoita Y."/>
            <person name="Shi Y.-B."/>
            <person name="Brown D.D."/>
        </authorList>
    </citation>
    <scope>NUCLEOTIDE SEQUENCE [MRNA] (ISOFORMS BETA-B1 AND BETA-B2)</scope>
    <scope>DEVELOPMENTAL STAGE</scope>
    <scope>INDUCTION</scope>
    <source>
        <tissue>Tadpole</tissue>
    </source>
</reference>
<reference key="2">
    <citation type="journal article" date="1990" name="Proc. Natl. Acad. Sci. U.S.A.">
        <authorList>
            <person name="Yaoita Y."/>
            <person name="Shi Y.-B."/>
            <person name="Brown D.D."/>
        </authorList>
    </citation>
    <scope>ERRATUM OF PUBMED:2402492</scope>
</reference>
<evidence type="ECO:0000255" key="1">
    <source>
        <dbReference type="PROSITE-ProRule" id="PRU00407"/>
    </source>
</evidence>
<evidence type="ECO:0000255" key="2">
    <source>
        <dbReference type="PROSITE-ProRule" id="PRU01189"/>
    </source>
</evidence>
<evidence type="ECO:0000269" key="3">
    <source>
    </source>
</evidence>
<evidence type="ECO:0000303" key="4">
    <source>
    </source>
</evidence>
<evidence type="ECO:0000305" key="5"/>
<name>THBB_XENLA</name>
<feature type="chain" id="PRO_0000053459" description="Thyroid hormone receptor beta-B">
    <location>
        <begin position="1"/>
        <end position="414"/>
    </location>
</feature>
<feature type="domain" description="NR LBD" evidence="2">
    <location>
        <begin position="170"/>
        <end position="414"/>
    </location>
</feature>
<feature type="DNA-binding region" description="Nuclear receptor" evidence="1">
    <location>
        <begin position="60"/>
        <end position="134"/>
    </location>
</feature>
<feature type="zinc finger region" description="NR C4-type" evidence="1">
    <location>
        <begin position="60"/>
        <end position="80"/>
    </location>
</feature>
<feature type="zinc finger region" description="NR C4-type" evidence="1">
    <location>
        <begin position="98"/>
        <end position="122"/>
    </location>
</feature>
<feature type="region of interest" description="Modulating">
    <location>
        <begin position="1"/>
        <end position="59"/>
    </location>
</feature>
<feature type="splice variant" id="VSP_003628" description="In isoform Beta-B1." evidence="4">
    <location>
        <begin position="7"/>
        <end position="46"/>
    </location>
</feature>